<accession>Q89V70</accession>
<protein>
    <recommendedName>
        <fullName>ATP synthase subunit b 2</fullName>
    </recommendedName>
    <alternativeName>
        <fullName>ATP synthase F(0) sector subunit b 2</fullName>
    </alternativeName>
    <alternativeName>
        <fullName>ATPase subunit I 2</fullName>
    </alternativeName>
    <alternativeName>
        <fullName>F-type ATPase subunit b 2</fullName>
        <shortName>F-ATPase subunit b 2</shortName>
    </alternativeName>
</protein>
<feature type="chain" id="PRO_0000369002" description="ATP synthase subunit b 2">
    <location>
        <begin position="1"/>
        <end position="187"/>
    </location>
</feature>
<feature type="transmembrane region" description="Helical" evidence="2">
    <location>
        <begin position="39"/>
        <end position="59"/>
    </location>
</feature>
<feature type="region of interest" description="Disordered" evidence="3">
    <location>
        <begin position="1"/>
        <end position="25"/>
    </location>
</feature>
<feature type="region of interest" description="Disordered" evidence="3">
    <location>
        <begin position="103"/>
        <end position="122"/>
    </location>
</feature>
<feature type="compositionally biased region" description="Basic and acidic residues" evidence="3">
    <location>
        <begin position="110"/>
        <end position="122"/>
    </location>
</feature>
<sequence length="187" mass="18973">MAESHGGAKGPAAGAHTGAEGGHGGGFPPFESSTYASQLVSLAIFFVVLYVIVSKLALPKVGGAIEARQNKIEGDLAEAQTLRDQSDAALKAYESELASARSRAQAIGNESRDKANAQAETERKALEEQLAAKLAGAEKTIASTRTAAMSNVRGIAADAAGQIVQQLTGVVPDAASVNAAVDASLKG</sequence>
<gene>
    <name type="primary">atpF2</name>
    <name type="synonym">atpG</name>
    <name type="ordered locus">bll1186</name>
</gene>
<evidence type="ECO:0000250" key="1"/>
<evidence type="ECO:0000255" key="2"/>
<evidence type="ECO:0000256" key="3">
    <source>
        <dbReference type="SAM" id="MobiDB-lite"/>
    </source>
</evidence>
<evidence type="ECO:0000305" key="4"/>
<dbReference type="EMBL" id="BA000040">
    <property type="protein sequence ID" value="BAC46451.1"/>
    <property type="molecule type" value="Genomic_DNA"/>
</dbReference>
<dbReference type="RefSeq" id="NP_767826.1">
    <property type="nucleotide sequence ID" value="NC_004463.1"/>
</dbReference>
<dbReference type="RefSeq" id="WP_011084005.1">
    <property type="nucleotide sequence ID" value="NC_004463.1"/>
</dbReference>
<dbReference type="SMR" id="Q89V70"/>
<dbReference type="STRING" id="224911.AAV28_02815"/>
<dbReference type="EnsemblBacteria" id="BAC46451">
    <property type="protein sequence ID" value="BAC46451"/>
    <property type="gene ID" value="BAC46451"/>
</dbReference>
<dbReference type="GeneID" id="46488461"/>
<dbReference type="KEGG" id="bja:bll1186"/>
<dbReference type="PATRIC" id="fig|224911.44.peg.589"/>
<dbReference type="eggNOG" id="COG0711">
    <property type="taxonomic scope" value="Bacteria"/>
</dbReference>
<dbReference type="HOGENOM" id="CLU_079215_1_2_5"/>
<dbReference type="InParanoid" id="Q89V70"/>
<dbReference type="OrthoDB" id="9805716at2"/>
<dbReference type="PhylomeDB" id="Q89V70"/>
<dbReference type="Proteomes" id="UP000002526">
    <property type="component" value="Chromosome"/>
</dbReference>
<dbReference type="GO" id="GO:0005886">
    <property type="term" value="C:plasma membrane"/>
    <property type="evidence" value="ECO:0007669"/>
    <property type="project" value="UniProtKB-SubCell"/>
</dbReference>
<dbReference type="GO" id="GO:0045259">
    <property type="term" value="C:proton-transporting ATP synthase complex"/>
    <property type="evidence" value="ECO:0007669"/>
    <property type="project" value="UniProtKB-KW"/>
</dbReference>
<dbReference type="GO" id="GO:0046933">
    <property type="term" value="F:proton-transporting ATP synthase activity, rotational mechanism"/>
    <property type="evidence" value="ECO:0007669"/>
    <property type="project" value="UniProtKB-UniRule"/>
</dbReference>
<dbReference type="CDD" id="cd06503">
    <property type="entry name" value="ATP-synt_Fo_b"/>
    <property type="match status" value="1"/>
</dbReference>
<dbReference type="HAMAP" id="MF_01398">
    <property type="entry name" value="ATP_synth_b_bprime"/>
    <property type="match status" value="1"/>
</dbReference>
<dbReference type="InterPro" id="IPR002146">
    <property type="entry name" value="ATP_synth_b/b'su_bac/chlpt"/>
</dbReference>
<dbReference type="InterPro" id="IPR050059">
    <property type="entry name" value="ATP_synthase_B_chain"/>
</dbReference>
<dbReference type="PANTHER" id="PTHR33445:SF1">
    <property type="entry name" value="ATP SYNTHASE SUBUNIT B"/>
    <property type="match status" value="1"/>
</dbReference>
<dbReference type="PANTHER" id="PTHR33445">
    <property type="entry name" value="ATP SYNTHASE SUBUNIT B', CHLOROPLASTIC"/>
    <property type="match status" value="1"/>
</dbReference>
<dbReference type="Pfam" id="PF00430">
    <property type="entry name" value="ATP-synt_B"/>
    <property type="match status" value="1"/>
</dbReference>
<reference key="1">
    <citation type="journal article" date="2002" name="DNA Res.">
        <title>Complete genomic sequence of nitrogen-fixing symbiotic bacterium Bradyrhizobium japonicum USDA110.</title>
        <authorList>
            <person name="Kaneko T."/>
            <person name="Nakamura Y."/>
            <person name="Sato S."/>
            <person name="Minamisawa K."/>
            <person name="Uchiumi T."/>
            <person name="Sasamoto S."/>
            <person name="Watanabe A."/>
            <person name="Idesawa K."/>
            <person name="Iriguchi M."/>
            <person name="Kawashima K."/>
            <person name="Kohara M."/>
            <person name="Matsumoto M."/>
            <person name="Shimpo S."/>
            <person name="Tsuruoka H."/>
            <person name="Wada T."/>
            <person name="Yamada M."/>
            <person name="Tabata S."/>
        </authorList>
    </citation>
    <scope>NUCLEOTIDE SEQUENCE [LARGE SCALE GENOMIC DNA]</scope>
    <source>
        <strain>JCM 10833 / BCRC 13528 / IAM 13628 / NBRC 14792 / USDA 110</strain>
    </source>
</reference>
<comment type="function">
    <text evidence="1">F(1)F(0) ATP synthase produces ATP from ADP in the presence of a proton or sodium gradient. F-type ATPases consist of two structural domains, F(1) containing the extramembraneous catalytic core and F(0) containing the membrane proton channel, linked together by a central stalk and a peripheral stalk. During catalysis, ATP synthesis in the catalytic domain of F(1) is coupled via a rotary mechanism of the central stalk subunits to proton translocation (By similarity).</text>
</comment>
<comment type="function">
    <text evidence="1">Component of the F(0) channel, it forms part of the peripheral stalk, linking F(1) to F(0). The b'-subunit is a diverged and duplicated form of b found in plants and photosynthetic bacteria (By similarity).</text>
</comment>
<comment type="subunit">
    <text evidence="1">F-type ATPases have 2 components, F(1) - the catalytic core - and F(0) - the membrane proton channel. F(1) has five subunits: alpha(3), beta(3), gamma(1), delta(1), epsilon(1). F(0) has three main subunits: a(1), b(2) and c(10-14). The alpha and beta chains form an alternating ring which encloses part of the gamma chain. F(1) is attached to F(0) by a central stalk formed by the gamma and epsilon chains, while a peripheral stalk is formed by the delta and b chains (By similarity).</text>
</comment>
<comment type="subcellular location">
    <subcellularLocation>
        <location evidence="1">Cell inner membrane</location>
        <topology evidence="1">Single-pass membrane protein</topology>
    </subcellularLocation>
</comment>
<comment type="similarity">
    <text evidence="4">Belongs to the ATPase B chain family.</text>
</comment>
<organism>
    <name type="scientific">Bradyrhizobium diazoefficiens (strain JCM 10833 / BCRC 13528 / IAM 13628 / NBRC 14792 / USDA 110)</name>
    <dbReference type="NCBI Taxonomy" id="224911"/>
    <lineage>
        <taxon>Bacteria</taxon>
        <taxon>Pseudomonadati</taxon>
        <taxon>Pseudomonadota</taxon>
        <taxon>Alphaproteobacteria</taxon>
        <taxon>Hyphomicrobiales</taxon>
        <taxon>Nitrobacteraceae</taxon>
        <taxon>Bradyrhizobium</taxon>
    </lineage>
</organism>
<name>ATPF2_BRADU</name>
<keyword id="KW-0066">ATP synthesis</keyword>
<keyword id="KW-0997">Cell inner membrane</keyword>
<keyword id="KW-1003">Cell membrane</keyword>
<keyword id="KW-0138">CF(0)</keyword>
<keyword id="KW-0375">Hydrogen ion transport</keyword>
<keyword id="KW-0406">Ion transport</keyword>
<keyword id="KW-0472">Membrane</keyword>
<keyword id="KW-1185">Reference proteome</keyword>
<keyword id="KW-0812">Transmembrane</keyword>
<keyword id="KW-1133">Transmembrane helix</keyword>
<keyword id="KW-0813">Transport</keyword>
<proteinExistence type="inferred from homology"/>